<comment type="function">
    <text evidence="1">Beta subunit of AMP-activated protein kinase (AMPK), which is required for transcriptional, metabolic, and developmental adaptations in response to glucose limitation. Has a structural role, mediating heterotrimer formation, and a regulatory role, defining carbon source-regulated subcellular location and substrate specificity of the AMPK kinase complex.</text>
</comment>
<comment type="subunit">
    <text evidence="1">AMPK is a heterotrimer of an alpha catalytic subunit (ssp2), a beta (amk2) and a gamma non-catalytic subunits (cbs2). The beta subunit serves as a bridge between the catalytic and the regulatory subunit.</text>
</comment>
<comment type="subcellular location">
    <subcellularLocation>
        <location evidence="3">Cytoplasm</location>
    </subcellularLocation>
</comment>
<comment type="similarity">
    <text evidence="4">Belongs to the 5'-AMP-activated protein kinase beta subunit family.</text>
</comment>
<comment type="sequence caution" evidence="4">
    <conflict type="erroneous initiation">
        <sequence resource="EMBL-CDS" id="BAA13800"/>
    </conflict>
    <text>Extended N-terminus.</text>
</comment>
<gene>
    <name type="primary">amk2</name>
    <name evidence="5" type="ORF">SPCC1919.03c</name>
</gene>
<accession>P78789</accession>
<accession>Q1L851</accession>
<accession>Q9UU43</accession>
<reference key="1">
    <citation type="journal article" date="1997" name="DNA Res.">
        <title>Identification of open reading frames in Schizosaccharomyces pombe cDNAs.</title>
        <authorList>
            <person name="Yoshioka S."/>
            <person name="Kato K."/>
            <person name="Nakai K."/>
            <person name="Okayama H."/>
            <person name="Nojima H."/>
        </authorList>
    </citation>
    <scope>NUCLEOTIDE SEQUENCE [LARGE SCALE MRNA]</scope>
    <source>
        <strain>PR745</strain>
    </source>
</reference>
<reference key="2">
    <citation type="journal article" date="2002" name="Nature">
        <title>The genome sequence of Schizosaccharomyces pombe.</title>
        <authorList>
            <person name="Wood V."/>
            <person name="Gwilliam R."/>
            <person name="Rajandream M.A."/>
            <person name="Lyne M.H."/>
            <person name="Lyne R."/>
            <person name="Stewart A."/>
            <person name="Sgouros J.G."/>
            <person name="Peat N."/>
            <person name="Hayles J."/>
            <person name="Baker S.G."/>
            <person name="Basham D."/>
            <person name="Bowman S."/>
            <person name="Brooks K."/>
            <person name="Brown D."/>
            <person name="Brown S."/>
            <person name="Chillingworth T."/>
            <person name="Churcher C.M."/>
            <person name="Collins M."/>
            <person name="Connor R."/>
            <person name="Cronin A."/>
            <person name="Davis P."/>
            <person name="Feltwell T."/>
            <person name="Fraser A."/>
            <person name="Gentles S."/>
            <person name="Goble A."/>
            <person name="Hamlin N."/>
            <person name="Harris D.E."/>
            <person name="Hidalgo J."/>
            <person name="Hodgson G."/>
            <person name="Holroyd S."/>
            <person name="Hornsby T."/>
            <person name="Howarth S."/>
            <person name="Huckle E.J."/>
            <person name="Hunt S."/>
            <person name="Jagels K."/>
            <person name="James K.D."/>
            <person name="Jones L."/>
            <person name="Jones M."/>
            <person name="Leather S."/>
            <person name="McDonald S."/>
            <person name="McLean J."/>
            <person name="Mooney P."/>
            <person name="Moule S."/>
            <person name="Mungall K.L."/>
            <person name="Murphy L.D."/>
            <person name="Niblett D."/>
            <person name="Odell C."/>
            <person name="Oliver K."/>
            <person name="O'Neil S."/>
            <person name="Pearson D."/>
            <person name="Quail M.A."/>
            <person name="Rabbinowitsch E."/>
            <person name="Rutherford K.M."/>
            <person name="Rutter S."/>
            <person name="Saunders D."/>
            <person name="Seeger K."/>
            <person name="Sharp S."/>
            <person name="Skelton J."/>
            <person name="Simmonds M.N."/>
            <person name="Squares R."/>
            <person name="Squares S."/>
            <person name="Stevens K."/>
            <person name="Taylor K."/>
            <person name="Taylor R.G."/>
            <person name="Tivey A."/>
            <person name="Walsh S.V."/>
            <person name="Warren T."/>
            <person name="Whitehead S."/>
            <person name="Woodward J.R."/>
            <person name="Volckaert G."/>
            <person name="Aert R."/>
            <person name="Robben J."/>
            <person name="Grymonprez B."/>
            <person name="Weltjens I."/>
            <person name="Vanstreels E."/>
            <person name="Rieger M."/>
            <person name="Schaefer M."/>
            <person name="Mueller-Auer S."/>
            <person name="Gabel C."/>
            <person name="Fuchs M."/>
            <person name="Duesterhoeft A."/>
            <person name="Fritzc C."/>
            <person name="Holzer E."/>
            <person name="Moestl D."/>
            <person name="Hilbert H."/>
            <person name="Borzym K."/>
            <person name="Langer I."/>
            <person name="Beck A."/>
            <person name="Lehrach H."/>
            <person name="Reinhardt R."/>
            <person name="Pohl T.M."/>
            <person name="Eger P."/>
            <person name="Zimmermann W."/>
            <person name="Wedler H."/>
            <person name="Wambutt R."/>
            <person name="Purnelle B."/>
            <person name="Goffeau A."/>
            <person name="Cadieu E."/>
            <person name="Dreano S."/>
            <person name="Gloux S."/>
            <person name="Lelaure V."/>
            <person name="Mottier S."/>
            <person name="Galibert F."/>
            <person name="Aves S.J."/>
            <person name="Xiang Z."/>
            <person name="Hunt C."/>
            <person name="Moore K."/>
            <person name="Hurst S.M."/>
            <person name="Lucas M."/>
            <person name="Rochet M."/>
            <person name="Gaillardin C."/>
            <person name="Tallada V.A."/>
            <person name="Garzon A."/>
            <person name="Thode G."/>
            <person name="Daga R.R."/>
            <person name="Cruzado L."/>
            <person name="Jimenez J."/>
            <person name="Sanchez M."/>
            <person name="del Rey F."/>
            <person name="Benito J."/>
            <person name="Dominguez A."/>
            <person name="Revuelta J.L."/>
            <person name="Moreno S."/>
            <person name="Armstrong J."/>
            <person name="Forsburg S.L."/>
            <person name="Cerutti L."/>
            <person name="Lowe T."/>
            <person name="McCombie W.R."/>
            <person name="Paulsen I."/>
            <person name="Potashkin J."/>
            <person name="Shpakovski G.V."/>
            <person name="Ussery D."/>
            <person name="Barrell B.G."/>
            <person name="Nurse P."/>
        </authorList>
    </citation>
    <scope>NUCLEOTIDE SEQUENCE [LARGE SCALE GENOMIC DNA]</scope>
    <source>
        <strain>972 / ATCC 24843</strain>
    </source>
</reference>
<reference key="3">
    <citation type="journal article" date="2000" name="Genes Cells">
        <title>Large-scale screening of intracellular protein localization in living fission yeast cells by the use of a GFP-fusion genomic DNA library.</title>
        <authorList>
            <person name="Ding D.-Q."/>
            <person name="Tomita Y."/>
            <person name="Yamamoto A."/>
            <person name="Chikashige Y."/>
            <person name="Haraguchi T."/>
            <person name="Hiraoka Y."/>
        </authorList>
    </citation>
    <scope>NUCLEOTIDE SEQUENCE [LARGE SCALE GENOMIC DNA] OF 97-117</scope>
    <source>
        <strain>ATCC 38364 / 968</strain>
    </source>
</reference>
<reference key="4">
    <citation type="journal article" date="2006" name="Nat. Biotechnol.">
        <title>ORFeome cloning and global analysis of protein localization in the fission yeast Schizosaccharomyces pombe.</title>
        <authorList>
            <person name="Matsuyama A."/>
            <person name="Arai R."/>
            <person name="Yashiroda Y."/>
            <person name="Shirai A."/>
            <person name="Kamata A."/>
            <person name="Sekido S."/>
            <person name="Kobayashi Y."/>
            <person name="Hashimoto A."/>
            <person name="Hamamoto M."/>
            <person name="Hiraoka Y."/>
            <person name="Horinouchi S."/>
            <person name="Yoshida M."/>
        </authorList>
    </citation>
    <scope>SUBCELLULAR LOCATION [LARGE SCALE ANALYSIS]</scope>
</reference>
<reference key="5">
    <citation type="journal article" date="2007" name="Science">
        <title>Crystal structures of the adenylate sensor from fission yeast AMP-activated protein kinase.</title>
        <authorList>
            <person name="Townley R."/>
            <person name="Shapiro L."/>
        </authorList>
    </citation>
    <scope>X-RAY CRYSTALLOGRAPHY (2.60 ANGSTROMS) OF 203-298</scope>
    <scope>SUBUNIT</scope>
</reference>
<reference key="6">
    <citation type="journal article" date="2007" name="Structure">
        <title>Structural insight into AMPK regulation: ADP comes into play.</title>
        <authorList>
            <person name="Jin X."/>
            <person name="Townley R."/>
            <person name="Shapiro L."/>
        </authorList>
    </citation>
    <scope>X-RAY CRYSTALLOGRAPHY (2.41 ANGSTROMS) OF 203-298 IN COMPLEX WITH ADP</scope>
</reference>
<organism>
    <name type="scientific">Schizosaccharomyces pombe (strain 972 / ATCC 24843)</name>
    <name type="common">Fission yeast</name>
    <dbReference type="NCBI Taxonomy" id="284812"/>
    <lineage>
        <taxon>Eukaryota</taxon>
        <taxon>Fungi</taxon>
        <taxon>Dikarya</taxon>
        <taxon>Ascomycota</taxon>
        <taxon>Taphrinomycotina</taxon>
        <taxon>Schizosaccharomycetes</taxon>
        <taxon>Schizosaccharomycetales</taxon>
        <taxon>Schizosaccharomycetaceae</taxon>
        <taxon>Schizosaccharomyces</taxon>
    </lineage>
</organism>
<dbReference type="EMBL" id="D89138">
    <property type="protein sequence ID" value="BAA13800.1"/>
    <property type="status" value="ALT_INIT"/>
    <property type="molecule type" value="mRNA"/>
</dbReference>
<dbReference type="EMBL" id="CU329672">
    <property type="protein sequence ID" value="CAA22634.1"/>
    <property type="molecule type" value="Genomic_DNA"/>
</dbReference>
<dbReference type="EMBL" id="AB027823">
    <property type="protein sequence ID" value="BAA87127.1"/>
    <property type="molecule type" value="Genomic_DNA"/>
</dbReference>
<dbReference type="PIR" id="T41228">
    <property type="entry name" value="T41228"/>
</dbReference>
<dbReference type="PIR" id="T42415">
    <property type="entry name" value="T42415"/>
</dbReference>
<dbReference type="RefSeq" id="NP_588485.1">
    <property type="nucleotide sequence ID" value="NM_001023476.2"/>
</dbReference>
<dbReference type="PDB" id="2OOX">
    <property type="method" value="X-ray"/>
    <property type="resolution" value="2.60 A"/>
    <property type="chains" value="B/D=203-298"/>
</dbReference>
<dbReference type="PDB" id="2OOY">
    <property type="method" value="X-ray"/>
    <property type="resolution" value="2.88 A"/>
    <property type="chains" value="B/D=203-298"/>
</dbReference>
<dbReference type="PDB" id="2QR1">
    <property type="method" value="X-ray"/>
    <property type="resolution" value="2.70 A"/>
    <property type="chains" value="B/D=203-298"/>
</dbReference>
<dbReference type="PDB" id="2QRC">
    <property type="method" value="X-ray"/>
    <property type="resolution" value="2.70 A"/>
    <property type="chains" value="B/D=203-298"/>
</dbReference>
<dbReference type="PDB" id="2QRD">
    <property type="method" value="X-ray"/>
    <property type="resolution" value="2.41 A"/>
    <property type="chains" value="B/D=203-298"/>
</dbReference>
<dbReference type="PDB" id="2QRE">
    <property type="method" value="X-ray"/>
    <property type="resolution" value="3.01 A"/>
    <property type="chains" value="B/D=203-298"/>
</dbReference>
<dbReference type="PDBsum" id="2OOX"/>
<dbReference type="PDBsum" id="2OOY"/>
<dbReference type="PDBsum" id="2QR1"/>
<dbReference type="PDBsum" id="2QRC"/>
<dbReference type="PDBsum" id="2QRD"/>
<dbReference type="PDBsum" id="2QRE"/>
<dbReference type="SMR" id="P78789"/>
<dbReference type="BioGRID" id="275702">
    <property type="interactions" value="631"/>
</dbReference>
<dbReference type="ComplexPortal" id="CPX-25752">
    <property type="entry name" value="AMPK complex"/>
</dbReference>
<dbReference type="DIP" id="DIP-29521N"/>
<dbReference type="FunCoup" id="P78789">
    <property type="interactions" value="132"/>
</dbReference>
<dbReference type="IntAct" id="P78789">
    <property type="interactions" value="2"/>
</dbReference>
<dbReference type="STRING" id="284812.P78789"/>
<dbReference type="CAZy" id="CBM48">
    <property type="family name" value="Carbohydrate-Binding Module Family 48"/>
</dbReference>
<dbReference type="iPTMnet" id="P78789"/>
<dbReference type="SwissPalm" id="P78789"/>
<dbReference type="PaxDb" id="4896-SPCC1919.03c.1"/>
<dbReference type="EnsemblFungi" id="SPCC1919.03c.1">
    <property type="protein sequence ID" value="SPCC1919.03c.1:pep"/>
    <property type="gene ID" value="SPCC1919.03c"/>
</dbReference>
<dbReference type="GeneID" id="2539130"/>
<dbReference type="KEGG" id="spo:2539130"/>
<dbReference type="PomBase" id="SPCC1919.03c">
    <property type="gene designation" value="amk2"/>
</dbReference>
<dbReference type="VEuPathDB" id="FungiDB:SPCC1919.03c"/>
<dbReference type="eggNOG" id="KOG1616">
    <property type="taxonomic scope" value="Eukaryota"/>
</dbReference>
<dbReference type="HOGENOM" id="CLU_070949_2_1_1"/>
<dbReference type="InParanoid" id="P78789"/>
<dbReference type="OMA" id="HEYKFMV"/>
<dbReference type="PhylomeDB" id="P78789"/>
<dbReference type="Reactome" id="R-SPO-1632852">
    <property type="pathway name" value="Macroautophagy"/>
</dbReference>
<dbReference type="Reactome" id="R-SPO-163680">
    <property type="pathway name" value="AMPK inhibits chREBP transcriptional activation activity"/>
</dbReference>
<dbReference type="Reactome" id="R-SPO-200425">
    <property type="pathway name" value="Carnitine shuttle"/>
</dbReference>
<dbReference type="Reactome" id="R-SPO-380972">
    <property type="pathway name" value="Energy dependent regulation of mTOR by LKB1-AMPK"/>
</dbReference>
<dbReference type="Reactome" id="R-SPO-5628897">
    <property type="pathway name" value="TP53 Regulates Metabolic Genes"/>
</dbReference>
<dbReference type="EvolutionaryTrace" id="P78789"/>
<dbReference type="PRO" id="PR:P78789"/>
<dbReference type="Proteomes" id="UP000002485">
    <property type="component" value="Chromosome III"/>
</dbReference>
<dbReference type="GO" id="GO:0005737">
    <property type="term" value="C:cytoplasm"/>
    <property type="evidence" value="ECO:0000314"/>
    <property type="project" value="PomBase"/>
</dbReference>
<dbReference type="GO" id="GO:0005829">
    <property type="term" value="C:cytosol"/>
    <property type="evidence" value="ECO:0007005"/>
    <property type="project" value="PomBase"/>
</dbReference>
<dbReference type="GO" id="GO:0031588">
    <property type="term" value="C:nucleotide-activated protein kinase complex"/>
    <property type="evidence" value="ECO:0000314"/>
    <property type="project" value="PomBase"/>
</dbReference>
<dbReference type="GO" id="GO:0005634">
    <property type="term" value="C:nucleus"/>
    <property type="evidence" value="ECO:0000314"/>
    <property type="project" value="PomBase"/>
</dbReference>
<dbReference type="GO" id="GO:0005886">
    <property type="term" value="C:plasma membrane"/>
    <property type="evidence" value="ECO:0000266"/>
    <property type="project" value="PomBase"/>
</dbReference>
<dbReference type="GO" id="GO:0019901">
    <property type="term" value="F:protein kinase binding"/>
    <property type="evidence" value="ECO:0000318"/>
    <property type="project" value="GO_Central"/>
</dbReference>
<dbReference type="GO" id="GO:0019887">
    <property type="term" value="F:protein kinase regulator activity"/>
    <property type="evidence" value="ECO:0000266"/>
    <property type="project" value="PomBase"/>
</dbReference>
<dbReference type="GO" id="GO:0061762">
    <property type="term" value="P:CAMKK-AMPK signaling cascade"/>
    <property type="evidence" value="ECO:0000305"/>
    <property type="project" value="PomBase"/>
</dbReference>
<dbReference type="GO" id="GO:0010514">
    <property type="term" value="P:induction of conjugation with cellular fusion"/>
    <property type="evidence" value="ECO:0000269"/>
    <property type="project" value="PomBase"/>
</dbReference>
<dbReference type="GO" id="GO:1900735">
    <property type="term" value="P:positive regulation of flocculation"/>
    <property type="evidence" value="ECO:0000316"/>
    <property type="project" value="PomBase"/>
</dbReference>
<dbReference type="GO" id="GO:0007165">
    <property type="term" value="P:signal transduction"/>
    <property type="evidence" value="ECO:0000318"/>
    <property type="project" value="GO_Central"/>
</dbReference>
<dbReference type="CDD" id="cd02859">
    <property type="entry name" value="E_set_AMPKbeta_like_N"/>
    <property type="match status" value="1"/>
</dbReference>
<dbReference type="FunFam" id="2.60.40.10:FF:000562">
    <property type="entry name" value="Snf1 kinase complex beta-subunit Gal83"/>
    <property type="match status" value="1"/>
</dbReference>
<dbReference type="Gene3D" id="6.20.250.60">
    <property type="match status" value="1"/>
</dbReference>
<dbReference type="Gene3D" id="2.60.40.10">
    <property type="entry name" value="Immunoglobulins"/>
    <property type="match status" value="1"/>
</dbReference>
<dbReference type="InterPro" id="IPR032640">
    <property type="entry name" value="AMPK1_CBM"/>
</dbReference>
<dbReference type="InterPro" id="IPR006828">
    <property type="entry name" value="ASC_dom"/>
</dbReference>
<dbReference type="InterPro" id="IPR037256">
    <property type="entry name" value="ASC_dom_sf"/>
</dbReference>
<dbReference type="InterPro" id="IPR050827">
    <property type="entry name" value="CRP1_MDG1_kinase"/>
</dbReference>
<dbReference type="InterPro" id="IPR013783">
    <property type="entry name" value="Ig-like_fold"/>
</dbReference>
<dbReference type="InterPro" id="IPR014756">
    <property type="entry name" value="Ig_E-set"/>
</dbReference>
<dbReference type="PANTHER" id="PTHR10343">
    <property type="entry name" value="5'-AMP-ACTIVATED PROTEIN KINASE , BETA SUBUNIT"/>
    <property type="match status" value="1"/>
</dbReference>
<dbReference type="PANTHER" id="PTHR10343:SF84">
    <property type="entry name" value="5'-AMP-ACTIVATED PROTEIN KINASE SUBUNIT BETA-1"/>
    <property type="match status" value="1"/>
</dbReference>
<dbReference type="Pfam" id="PF16561">
    <property type="entry name" value="AMPK1_CBM"/>
    <property type="match status" value="1"/>
</dbReference>
<dbReference type="Pfam" id="PF04739">
    <property type="entry name" value="AMPKBI"/>
    <property type="match status" value="1"/>
</dbReference>
<dbReference type="SMART" id="SM01010">
    <property type="entry name" value="AMPKBI"/>
    <property type="match status" value="1"/>
</dbReference>
<dbReference type="SUPFAM" id="SSF160219">
    <property type="entry name" value="AMPKBI-like"/>
    <property type="match status" value="1"/>
</dbReference>
<dbReference type="SUPFAM" id="SSF81296">
    <property type="entry name" value="E set domains"/>
    <property type="match status" value="1"/>
</dbReference>
<protein>
    <recommendedName>
        <fullName>5'-AMP-activated protein kinase subunit beta</fullName>
        <shortName>AMPK subunit beta</shortName>
    </recommendedName>
</protein>
<proteinExistence type="evidence at protein level"/>
<evidence type="ECO:0000250" key="1">
    <source>
        <dbReference type="UniProtKB" id="P34164"/>
    </source>
</evidence>
<evidence type="ECO:0000256" key="2">
    <source>
        <dbReference type="SAM" id="MobiDB-lite"/>
    </source>
</evidence>
<evidence type="ECO:0000269" key="3">
    <source>
    </source>
</evidence>
<evidence type="ECO:0000305" key="4"/>
<evidence type="ECO:0000312" key="5">
    <source>
        <dbReference type="PomBase" id="SPCC1919.03c"/>
    </source>
</evidence>
<evidence type="ECO:0007744" key="6">
    <source>
        <dbReference type="PDB" id="2QR1"/>
    </source>
</evidence>
<evidence type="ECO:0007744" key="7">
    <source>
        <dbReference type="PDB" id="2QRC"/>
    </source>
</evidence>
<evidence type="ECO:0007744" key="8">
    <source>
        <dbReference type="PDB" id="2QRD"/>
    </source>
</evidence>
<evidence type="ECO:0007829" key="9">
    <source>
        <dbReference type="PDB" id="2OOX"/>
    </source>
</evidence>
<evidence type="ECO:0007829" key="10">
    <source>
        <dbReference type="PDB" id="2QR1"/>
    </source>
</evidence>
<evidence type="ECO:0007829" key="11">
    <source>
        <dbReference type="PDB" id="2QRD"/>
    </source>
</evidence>
<keyword id="KW-0002">3D-structure</keyword>
<keyword id="KW-0963">Cytoplasm</keyword>
<keyword id="KW-1185">Reference proteome</keyword>
<name>AAKB_SCHPO</name>
<sequence>MGNVQSQEGETRAHAVPSQDATTTPDNANNVPKEPRAQSMISIAADDLNQEGEMSDDNQQEGGNNRTSQNGTSGSSGHTKRRSQTSGKKTHQPYSGPCVPTIIRWRGGGEVVYVTGSFSRWKKKIQLLKSEDYTVLLQLRPGTQRFKFLVDGIWCCSSDFPTATDAEGNLYNYLEVEANEKLGASIDERLSQVHTDLPMEEKSESEQYSTEIPAFLTSNTLQELKLPKPPSLPPHLEKCILNSNTAYKEDQSVLPNPNHVLLNHLAAANTQLGVLALSATTRYHRKYVTTAMFKNFDV</sequence>
<feature type="chain" id="PRO_0000339125" description="5'-AMP-activated protein kinase subunit beta">
    <location>
        <begin position="1"/>
        <end position="298"/>
    </location>
</feature>
<feature type="region of interest" description="Disordered" evidence="2">
    <location>
        <begin position="1"/>
        <end position="98"/>
    </location>
</feature>
<feature type="compositionally biased region" description="Polar residues" evidence="2">
    <location>
        <begin position="19"/>
        <end position="30"/>
    </location>
</feature>
<feature type="compositionally biased region" description="Acidic residues" evidence="2">
    <location>
        <begin position="48"/>
        <end position="59"/>
    </location>
</feature>
<feature type="compositionally biased region" description="Polar residues" evidence="2">
    <location>
        <begin position="60"/>
        <end position="77"/>
    </location>
</feature>
<feature type="compositionally biased region" description="Basic residues" evidence="2">
    <location>
        <begin position="78"/>
        <end position="91"/>
    </location>
</feature>
<feature type="binding site" evidence="6 7 8">
    <location>
        <begin position="250"/>
        <end position="252"/>
    </location>
    <ligand>
        <name>ADP</name>
        <dbReference type="ChEBI" id="CHEBI:456216"/>
        <note>ligand shared with subunit gamma</note>
    </ligand>
</feature>
<feature type="strand" evidence="11">
    <location>
        <begin position="209"/>
        <end position="211"/>
    </location>
</feature>
<feature type="helix" evidence="11">
    <location>
        <begin position="214"/>
        <end position="216"/>
    </location>
</feature>
<feature type="strand" evidence="9">
    <location>
        <begin position="217"/>
        <end position="219"/>
    </location>
</feature>
<feature type="strand" evidence="10">
    <location>
        <begin position="220"/>
        <end position="223"/>
    </location>
</feature>
<feature type="helix" evidence="11">
    <location>
        <begin position="234"/>
        <end position="236"/>
    </location>
</feature>
<feature type="helix" evidence="11">
    <location>
        <begin position="240"/>
        <end position="242"/>
    </location>
</feature>
<feature type="helix" evidence="11">
    <location>
        <begin position="247"/>
        <end position="250"/>
    </location>
</feature>
<feature type="strand" evidence="9">
    <location>
        <begin position="251"/>
        <end position="253"/>
    </location>
</feature>
<feature type="helix" evidence="11">
    <location>
        <begin position="259"/>
        <end position="261"/>
    </location>
</feature>
<feature type="strand" evidence="11">
    <location>
        <begin position="266"/>
        <end position="268"/>
    </location>
</feature>
<feature type="strand" evidence="11">
    <location>
        <begin position="271"/>
        <end position="283"/>
    </location>
</feature>
<feature type="strand" evidence="11">
    <location>
        <begin position="286"/>
        <end position="294"/>
    </location>
</feature>